<accession>P0CP07</accession>
<accession>Q55MF8</accession>
<accession>Q5K8B4</accession>
<organism>
    <name type="scientific">Cryptococcus neoformans var. neoformans serotype D (strain B-3501A)</name>
    <name type="common">Filobasidiella neoformans</name>
    <dbReference type="NCBI Taxonomy" id="283643"/>
    <lineage>
        <taxon>Eukaryota</taxon>
        <taxon>Fungi</taxon>
        <taxon>Dikarya</taxon>
        <taxon>Basidiomycota</taxon>
        <taxon>Agaricomycotina</taxon>
        <taxon>Tremellomycetes</taxon>
        <taxon>Tremellales</taxon>
        <taxon>Cryptococcaceae</taxon>
        <taxon>Cryptococcus</taxon>
        <taxon>Cryptococcus neoformans species complex</taxon>
    </lineage>
</organism>
<feature type="chain" id="PRO_0000410160" description="Nascent polypeptide-associated complex subunit alpha">
    <location>
        <begin position="1"/>
        <end position="191"/>
    </location>
</feature>
<feature type="domain" description="NAC-A/B" evidence="2">
    <location>
        <begin position="24"/>
        <end position="89"/>
    </location>
</feature>
<feature type="domain" description="UBA">
    <location>
        <begin position="153"/>
        <end position="191"/>
    </location>
</feature>
<feature type="region of interest" description="Disordered" evidence="3">
    <location>
        <begin position="126"/>
        <end position="149"/>
    </location>
</feature>
<feature type="compositionally biased region" description="Low complexity" evidence="3">
    <location>
        <begin position="127"/>
        <end position="139"/>
    </location>
</feature>
<reference key="1">
    <citation type="journal article" date="2005" name="Science">
        <title>The genome of the basidiomycetous yeast and human pathogen Cryptococcus neoformans.</title>
        <authorList>
            <person name="Loftus B.J."/>
            <person name="Fung E."/>
            <person name="Roncaglia P."/>
            <person name="Rowley D."/>
            <person name="Amedeo P."/>
            <person name="Bruno D."/>
            <person name="Vamathevan J."/>
            <person name="Miranda M."/>
            <person name="Anderson I.J."/>
            <person name="Fraser J.A."/>
            <person name="Allen J.E."/>
            <person name="Bosdet I.E."/>
            <person name="Brent M.R."/>
            <person name="Chiu R."/>
            <person name="Doering T.L."/>
            <person name="Donlin M.J."/>
            <person name="D'Souza C.A."/>
            <person name="Fox D.S."/>
            <person name="Grinberg V."/>
            <person name="Fu J."/>
            <person name="Fukushima M."/>
            <person name="Haas B.J."/>
            <person name="Huang J.C."/>
            <person name="Janbon G."/>
            <person name="Jones S.J.M."/>
            <person name="Koo H.L."/>
            <person name="Krzywinski M.I."/>
            <person name="Kwon-Chung K.J."/>
            <person name="Lengeler K.B."/>
            <person name="Maiti R."/>
            <person name="Marra M.A."/>
            <person name="Marra R.E."/>
            <person name="Mathewson C.A."/>
            <person name="Mitchell T.G."/>
            <person name="Pertea M."/>
            <person name="Riggs F.R."/>
            <person name="Salzberg S.L."/>
            <person name="Schein J.E."/>
            <person name="Shvartsbeyn A."/>
            <person name="Shin H."/>
            <person name="Shumway M."/>
            <person name="Specht C.A."/>
            <person name="Suh B.B."/>
            <person name="Tenney A."/>
            <person name="Utterback T.R."/>
            <person name="Wickes B.L."/>
            <person name="Wortman J.R."/>
            <person name="Wye N.H."/>
            <person name="Kronstad J.W."/>
            <person name="Lodge J.K."/>
            <person name="Heitman J."/>
            <person name="Davis R.W."/>
            <person name="Fraser C.M."/>
            <person name="Hyman R.W."/>
        </authorList>
    </citation>
    <scope>NUCLEOTIDE SEQUENCE [LARGE SCALE GENOMIC DNA]</scope>
    <source>
        <strain>B-3501A</strain>
    </source>
</reference>
<proteinExistence type="inferred from homology"/>
<sequence>MSIENLHIADETEIPAGATVELHSRPERKARKALEGLGLKRVQGIQRVTLRRARNVLLVVSSPEVYKSPGSDCYIVFGEAKVEDPNSAAQLQAQAQLAASSQAAQQAHAHGGFKEGVPKSLEELMQDAPSADSSAPAPSGEATDASASGDFKVSDEEIQLIVAQTGVDEAKAREAYISEKGDLINAIMKLQ</sequence>
<protein>
    <recommendedName>
        <fullName>Nascent polypeptide-associated complex subunit alpha</fullName>
        <shortName>NAC-alpha</shortName>
    </recommendedName>
    <alternativeName>
        <fullName>Alpha-NAC</fullName>
    </alternativeName>
</protein>
<comment type="function">
    <text evidence="1">Component of the nascent polypeptide-associated complex (NAC), a dynamic component of the ribosomal exit tunnel, protecting the emerging polypeptides from interaction with other cytoplasmic proteins to ensure appropriate nascent protein targeting. The NAC complex also promotes mitochondrial protein import by enhancing productive ribosome interactions with the outer mitochondrial membrane and blocks the inappropriate interaction of ribosomes translating non-secretory nascent polypeptides with translocation sites in the membrane of the endoplasmic reticulum. EGD2 may also be involved in transcription regulation (By similarity).</text>
</comment>
<comment type="subunit">
    <text evidence="1">Part of the nascent polypeptide-associated complex (NAC), consisting of EGD2 and EGD1. NAC associates with ribosomes via EGD1 (By similarity).</text>
</comment>
<comment type="subcellular location">
    <subcellularLocation>
        <location evidence="1">Cytoplasm</location>
    </subcellularLocation>
    <subcellularLocation>
        <location evidence="1">Nucleus</location>
    </subcellularLocation>
    <text evidence="1">Predominantly cytoplasmic, may also transiently localize to the nucleus.</text>
</comment>
<comment type="similarity">
    <text evidence="4">Belongs to the NAC-alpha family.</text>
</comment>
<keyword id="KW-0963">Cytoplasm</keyword>
<keyword id="KW-0539">Nucleus</keyword>
<keyword id="KW-0653">Protein transport</keyword>
<keyword id="KW-0813">Transport</keyword>
<dbReference type="EMBL" id="AAEY01000044">
    <property type="protein sequence ID" value="EAL18793.1"/>
    <property type="molecule type" value="Genomic_DNA"/>
</dbReference>
<dbReference type="RefSeq" id="XP_773440.1">
    <property type="nucleotide sequence ID" value="XM_768347.1"/>
</dbReference>
<dbReference type="SMR" id="P0CP07"/>
<dbReference type="GeneID" id="4938007"/>
<dbReference type="KEGG" id="cnb:CNBI0540"/>
<dbReference type="VEuPathDB" id="FungiDB:CNBI0540"/>
<dbReference type="HOGENOM" id="CLU_057806_2_0_1"/>
<dbReference type="OrthoDB" id="7169at5206"/>
<dbReference type="GO" id="GO:0005854">
    <property type="term" value="C:nascent polypeptide-associated complex"/>
    <property type="evidence" value="ECO:0007669"/>
    <property type="project" value="EnsemblFungi"/>
</dbReference>
<dbReference type="GO" id="GO:0005634">
    <property type="term" value="C:nucleus"/>
    <property type="evidence" value="ECO:0007669"/>
    <property type="project" value="UniProtKB-SubCell"/>
</dbReference>
<dbReference type="GO" id="GO:0070300">
    <property type="term" value="F:phosphatidic acid binding"/>
    <property type="evidence" value="ECO:0007669"/>
    <property type="project" value="EnsemblFungi"/>
</dbReference>
<dbReference type="GO" id="GO:0080025">
    <property type="term" value="F:phosphatidylinositol-3,5-bisphosphate binding"/>
    <property type="evidence" value="ECO:0007669"/>
    <property type="project" value="EnsemblFungi"/>
</dbReference>
<dbReference type="GO" id="GO:0032266">
    <property type="term" value="F:phosphatidylinositol-3-phosphate binding"/>
    <property type="evidence" value="ECO:0007669"/>
    <property type="project" value="EnsemblFungi"/>
</dbReference>
<dbReference type="GO" id="GO:0070273">
    <property type="term" value="F:phosphatidylinositol-4-phosphate binding"/>
    <property type="evidence" value="ECO:0007669"/>
    <property type="project" value="EnsemblFungi"/>
</dbReference>
<dbReference type="GO" id="GO:0051082">
    <property type="term" value="F:unfolded protein binding"/>
    <property type="evidence" value="ECO:0007669"/>
    <property type="project" value="EnsemblFungi"/>
</dbReference>
<dbReference type="GO" id="GO:0006613">
    <property type="term" value="P:cotranslational protein targeting to membrane"/>
    <property type="evidence" value="ECO:0007669"/>
    <property type="project" value="EnsemblFungi"/>
</dbReference>
<dbReference type="GO" id="GO:0015031">
    <property type="term" value="P:protein transport"/>
    <property type="evidence" value="ECO:0007669"/>
    <property type="project" value="UniProtKB-KW"/>
</dbReference>
<dbReference type="CDD" id="cd22054">
    <property type="entry name" value="NAC_NACA"/>
    <property type="match status" value="1"/>
</dbReference>
<dbReference type="CDD" id="cd14278">
    <property type="entry name" value="UBA_NAC_like"/>
    <property type="match status" value="1"/>
</dbReference>
<dbReference type="FunFam" id="2.20.70.30:FF:000002">
    <property type="entry name" value="Nascent polypeptide-associated complex (NAC), alpha subunit"/>
    <property type="match status" value="1"/>
</dbReference>
<dbReference type="Gene3D" id="1.10.8.10">
    <property type="entry name" value="DNA helicase RuvA subunit, C-terminal domain"/>
    <property type="match status" value="1"/>
</dbReference>
<dbReference type="Gene3D" id="2.20.70.30">
    <property type="entry name" value="Nascent polypeptide-associated complex domain"/>
    <property type="match status" value="1"/>
</dbReference>
<dbReference type="InterPro" id="IPR016641">
    <property type="entry name" value="EGD2/NACA0like"/>
</dbReference>
<dbReference type="InterPro" id="IPR044034">
    <property type="entry name" value="NAC-like_UBA"/>
</dbReference>
<dbReference type="InterPro" id="IPR038187">
    <property type="entry name" value="NAC_A/B_dom_sf"/>
</dbReference>
<dbReference type="InterPro" id="IPR002715">
    <property type="entry name" value="Nas_poly-pep-assoc_cplx_dom"/>
</dbReference>
<dbReference type="PANTHER" id="PTHR21713">
    <property type="entry name" value="NASCENT POLYPEPTIDE ASSOCIATED COMPLEX ALPHA SUBUNIT-RELATED"/>
    <property type="match status" value="1"/>
</dbReference>
<dbReference type="Pfam" id="PF01849">
    <property type="entry name" value="NAC"/>
    <property type="match status" value="1"/>
</dbReference>
<dbReference type="Pfam" id="PF19026">
    <property type="entry name" value="UBA_HYPK"/>
    <property type="match status" value="1"/>
</dbReference>
<dbReference type="PIRSF" id="PIRSF015901">
    <property type="entry name" value="NAC_alpha"/>
    <property type="match status" value="1"/>
</dbReference>
<dbReference type="SMART" id="SM01407">
    <property type="entry name" value="NAC"/>
    <property type="match status" value="1"/>
</dbReference>
<dbReference type="PROSITE" id="PS51151">
    <property type="entry name" value="NAC_AB"/>
    <property type="match status" value="1"/>
</dbReference>
<evidence type="ECO:0000250" key="1"/>
<evidence type="ECO:0000255" key="2">
    <source>
        <dbReference type="PROSITE-ProRule" id="PRU00507"/>
    </source>
</evidence>
<evidence type="ECO:0000256" key="3">
    <source>
        <dbReference type="SAM" id="MobiDB-lite"/>
    </source>
</evidence>
<evidence type="ECO:0000305" key="4"/>
<gene>
    <name type="primary">EGD2</name>
    <name type="ordered locus">CNBI0540</name>
</gene>
<name>NACA_CRYNB</name>